<reference key="1">
    <citation type="journal article" date="2011" name="J. Bacteriol.">
        <title>Comparative genomics of 28 Salmonella enterica isolates: evidence for CRISPR-mediated adaptive sublineage evolution.</title>
        <authorList>
            <person name="Fricke W.F."/>
            <person name="Mammel M.K."/>
            <person name="McDermott P.F."/>
            <person name="Tartera C."/>
            <person name="White D.G."/>
            <person name="Leclerc J.E."/>
            <person name="Ravel J."/>
            <person name="Cebula T.A."/>
        </authorList>
    </citation>
    <scope>NUCLEOTIDE SEQUENCE [LARGE SCALE GENOMIC DNA]</scope>
    <source>
        <strain>SL483</strain>
    </source>
</reference>
<feature type="chain" id="PRO_1000136260" description="Carnitinyl-CoA dehydratase">
    <location>
        <begin position="1"/>
        <end position="261"/>
    </location>
</feature>
<feature type="active site" description="Nucleophile" evidence="1">
    <location>
        <position position="111"/>
    </location>
</feature>
<feature type="active site" description="Proton acceptor" evidence="1">
    <location>
        <position position="131"/>
    </location>
</feature>
<proteinExistence type="inferred from homology"/>
<keyword id="KW-0456">Lyase</keyword>
<evidence type="ECO:0000255" key="1">
    <source>
        <dbReference type="HAMAP-Rule" id="MF_01051"/>
    </source>
</evidence>
<protein>
    <recommendedName>
        <fullName evidence="1">Carnitinyl-CoA dehydratase</fullName>
        <ecNumber evidence="1">4.2.1.149</ecNumber>
    </recommendedName>
    <alternativeName>
        <fullName evidence="1">Crotonobetainyl-CoA hydratase</fullName>
    </alternativeName>
</protein>
<accession>B5F749</accession>
<comment type="function">
    <text evidence="1">Catalyzes the reversible dehydration of L-carnitinyl-CoA to crotonobetainyl-CoA.</text>
</comment>
<comment type="catalytic activity">
    <reaction evidence="1">
        <text>(R)-carnitinyl-CoA = crotonobetainyl-CoA + H2O</text>
        <dbReference type="Rhea" id="RHEA:28338"/>
        <dbReference type="ChEBI" id="CHEBI:15377"/>
        <dbReference type="ChEBI" id="CHEBI:60932"/>
        <dbReference type="ChEBI" id="CHEBI:60933"/>
        <dbReference type="EC" id="4.2.1.149"/>
    </reaction>
</comment>
<comment type="pathway">
    <text evidence="1">Amine and polyamine metabolism; carnitine metabolism.</text>
</comment>
<comment type="similarity">
    <text evidence="1">Belongs to the enoyl-CoA hydratase/isomerase family.</text>
</comment>
<name>CAID_SALA4</name>
<sequence>MSESLHLTRNGPILEITLDRPKANAIDAKTSFAMGEAFLNFRDDPELRVAIITGGGEKFFSAGWDLKAAAEGEAPDADFGPGGFAGLTEIFDLDKPVIAAVNGYAFGGGFELALAADFIVCAENASFALPEAKLGIVPDSGGVLRLPKLLPPAIVNEMVMTGRRMSAEEALRWGIVNRVVSQSELMDSARELAQQLVNSAPLAIAALKEIYRATSEMPVEEGYRYIRSGVLKHYPSVLHSEDALEGPQAFAEKRDPVWKGR</sequence>
<gene>
    <name evidence="1" type="primary">caiD</name>
    <name type="ordered locus">SeAg_B0077</name>
</gene>
<dbReference type="EC" id="4.2.1.149" evidence="1"/>
<dbReference type="EMBL" id="CP001138">
    <property type="protein sequence ID" value="ACH52388.1"/>
    <property type="molecule type" value="Genomic_DNA"/>
</dbReference>
<dbReference type="RefSeq" id="WP_000004376.1">
    <property type="nucleotide sequence ID" value="NC_011149.1"/>
</dbReference>
<dbReference type="SMR" id="B5F749"/>
<dbReference type="KEGG" id="sea:SeAg_B0077"/>
<dbReference type="HOGENOM" id="CLU_009834_7_6_6"/>
<dbReference type="UniPathway" id="UPA00117"/>
<dbReference type="Proteomes" id="UP000008819">
    <property type="component" value="Chromosome"/>
</dbReference>
<dbReference type="GO" id="GO:0016836">
    <property type="term" value="F:hydro-lyase activity"/>
    <property type="evidence" value="ECO:0007669"/>
    <property type="project" value="UniProtKB-UniRule"/>
</dbReference>
<dbReference type="GO" id="GO:0008735">
    <property type="term" value="F:L-carnitine CoA-transferase activity"/>
    <property type="evidence" value="ECO:0007669"/>
    <property type="project" value="RHEA"/>
</dbReference>
<dbReference type="GO" id="GO:0009437">
    <property type="term" value="P:carnitine metabolic process"/>
    <property type="evidence" value="ECO:0007669"/>
    <property type="project" value="UniProtKB-UniRule"/>
</dbReference>
<dbReference type="GO" id="GO:0006635">
    <property type="term" value="P:fatty acid beta-oxidation"/>
    <property type="evidence" value="ECO:0007669"/>
    <property type="project" value="TreeGrafter"/>
</dbReference>
<dbReference type="CDD" id="cd06558">
    <property type="entry name" value="crotonase-like"/>
    <property type="match status" value="1"/>
</dbReference>
<dbReference type="FunFam" id="1.10.12.10:FF:000005">
    <property type="entry name" value="Carnitinyl-CoA dehydratase"/>
    <property type="match status" value="1"/>
</dbReference>
<dbReference type="FunFam" id="3.90.226.10:FF:000009">
    <property type="entry name" value="Carnitinyl-CoA dehydratase"/>
    <property type="match status" value="1"/>
</dbReference>
<dbReference type="Gene3D" id="3.90.226.10">
    <property type="entry name" value="2-enoyl-CoA Hydratase, Chain A, domain 1"/>
    <property type="match status" value="1"/>
</dbReference>
<dbReference type="Gene3D" id="1.10.12.10">
    <property type="entry name" value="Lyase 2-enoyl-coa Hydratase, Chain A, domain 2"/>
    <property type="match status" value="1"/>
</dbReference>
<dbReference type="HAMAP" id="MF_01051">
    <property type="entry name" value="CaiD"/>
    <property type="match status" value="1"/>
</dbReference>
<dbReference type="InterPro" id="IPR022852">
    <property type="entry name" value="Carnitinyl_CoA_dehydratase"/>
</dbReference>
<dbReference type="InterPro" id="IPR029045">
    <property type="entry name" value="ClpP/crotonase-like_dom_sf"/>
</dbReference>
<dbReference type="InterPro" id="IPR018376">
    <property type="entry name" value="Enoyl-CoA_hyd/isom_CS"/>
</dbReference>
<dbReference type="InterPro" id="IPR001753">
    <property type="entry name" value="Enoyl-CoA_hydra/iso"/>
</dbReference>
<dbReference type="InterPro" id="IPR014748">
    <property type="entry name" value="Enoyl-CoA_hydra_C"/>
</dbReference>
<dbReference type="NCBIfam" id="NF002936">
    <property type="entry name" value="PRK03580.1"/>
    <property type="match status" value="1"/>
</dbReference>
<dbReference type="PANTHER" id="PTHR11941:SF54">
    <property type="entry name" value="ENOYL-COA HYDRATASE, MITOCHONDRIAL"/>
    <property type="match status" value="1"/>
</dbReference>
<dbReference type="PANTHER" id="PTHR11941">
    <property type="entry name" value="ENOYL-COA HYDRATASE-RELATED"/>
    <property type="match status" value="1"/>
</dbReference>
<dbReference type="Pfam" id="PF00378">
    <property type="entry name" value="ECH_1"/>
    <property type="match status" value="1"/>
</dbReference>
<dbReference type="SUPFAM" id="SSF52096">
    <property type="entry name" value="ClpP/crotonase"/>
    <property type="match status" value="1"/>
</dbReference>
<dbReference type="PROSITE" id="PS00166">
    <property type="entry name" value="ENOYL_COA_HYDRATASE"/>
    <property type="match status" value="1"/>
</dbReference>
<organism>
    <name type="scientific">Salmonella agona (strain SL483)</name>
    <dbReference type="NCBI Taxonomy" id="454166"/>
    <lineage>
        <taxon>Bacteria</taxon>
        <taxon>Pseudomonadati</taxon>
        <taxon>Pseudomonadota</taxon>
        <taxon>Gammaproteobacteria</taxon>
        <taxon>Enterobacterales</taxon>
        <taxon>Enterobacteriaceae</taxon>
        <taxon>Salmonella</taxon>
    </lineage>
</organism>